<sequence>MAFTLYSLLQAALLCVNAIAVLHEERFLKNIGWGTDQGIGGFGEEPGIKSQLMNLIRSVRTVMRVPLIIVNSIAIVLLLLFG</sequence>
<comment type="function">
    <text evidence="1 7">Regulator of endoplasmic reticulum secretion that acts as a key determinant of brain size (PubMed:33122427). Required for secretion of extracellular matrix proteins (PubMed:33122427). Required for correct brain development by depositing sufficient extracellular matrix proteins for tissue integrity and the proliferation of neural progenitors (PubMed:33122427). Acts as a regulator of the unfolded protein response (UPR) (By similarity).</text>
</comment>
<comment type="interaction">
    <interactant intactId="EBI-725665">
        <id>Q9Y5U9</id>
    </interactant>
    <interactant intactId="EBI-11957045">
        <id>Q9NVV5-2</id>
        <label>AIG1</label>
    </interactant>
    <organismsDiffer>false</organismsDiffer>
    <experiments>3</experiments>
</comment>
<comment type="interaction">
    <interactant intactId="EBI-725665">
        <id>Q9Y5U9</id>
    </interactant>
    <interactant intactId="EBI-18323646">
        <id>Q8NEA5</id>
        <label>C19orf18</label>
    </interactant>
    <organismsDiffer>false</organismsDiffer>
    <experiments>3</experiments>
</comment>
<comment type="interaction">
    <interactant intactId="EBI-725665">
        <id>Q9Y5U9</id>
    </interactant>
    <interactant intactId="EBI-358858">
        <id>O14735</id>
        <label>CDIPT</label>
    </interactant>
    <organismsDiffer>false</organismsDiffer>
    <experiments>3</experiments>
</comment>
<comment type="interaction">
    <interactant intactId="EBI-725665">
        <id>Q9Y5U9</id>
    </interactant>
    <interactant intactId="EBI-1057080">
        <id>Q96G23</id>
        <label>CERS2</label>
    </interactant>
    <organismsDiffer>false</organismsDiffer>
    <experiments>3</experiments>
</comment>
<comment type="interaction">
    <interactant intactId="EBI-725665">
        <id>Q9Y5U9</id>
    </interactant>
    <interactant intactId="EBI-2622997">
        <id>Q9HA82</id>
        <label>CERS4</label>
    </interactant>
    <organismsDiffer>false</organismsDiffer>
    <experiments>3</experiments>
</comment>
<comment type="interaction">
    <interactant intactId="EBI-725665">
        <id>Q9Y5U9</id>
    </interactant>
    <interactant intactId="EBI-1056240">
        <id>P01037</id>
        <label>CST1</label>
    </interactant>
    <organismsDiffer>false</organismsDiffer>
    <experiments>3</experiments>
</comment>
<comment type="interaction">
    <interactant intactId="EBI-725665">
        <id>Q9Y5U9</id>
    </interactant>
    <interactant intactId="EBI-10962476">
        <id>Q9P2X0-2</id>
        <label>DPM3</label>
    </interactant>
    <organismsDiffer>false</organismsDiffer>
    <experiments>3</experiments>
</comment>
<comment type="interaction">
    <interactant intactId="EBI-725665">
        <id>Q9Y5U9</id>
    </interactant>
    <interactant intactId="EBI-3915253">
        <id>Q15125</id>
        <label>EBP</label>
    </interactant>
    <organismsDiffer>false</organismsDiffer>
    <experiments>3</experiments>
</comment>
<comment type="interaction">
    <interactant intactId="EBI-725665">
        <id>Q9Y5U9</id>
    </interactant>
    <interactant intactId="EBI-18535450">
        <id>Q9GZR5</id>
        <label>ELOVL4</label>
    </interactant>
    <organismsDiffer>false</organismsDiffer>
    <experiments>3</experiments>
</comment>
<comment type="interaction">
    <interactant intactId="EBI-725665">
        <id>Q9Y5U9</id>
    </interactant>
    <interactant intactId="EBI-10976398">
        <id>Q7Z2K6</id>
        <label>ERMP1</label>
    </interactant>
    <organismsDiffer>false</organismsDiffer>
    <experiments>3</experiments>
</comment>
<comment type="interaction">
    <interactant intactId="EBI-725665">
        <id>Q9Y5U9</id>
    </interactant>
    <interactant intactId="EBI-18938272">
        <id>Q96KR6</id>
        <label>FAM210B</label>
    </interactant>
    <organismsDiffer>false</organismsDiffer>
    <experiments>3</experiments>
</comment>
<comment type="interaction">
    <interactant intactId="EBI-725665">
        <id>Q9Y5U9</id>
    </interactant>
    <interactant intactId="EBI-17565645">
        <id>P08034</id>
        <label>GJB1</label>
    </interactant>
    <organismsDiffer>false</organismsDiffer>
    <experiments>3</experiments>
</comment>
<comment type="interaction">
    <interactant intactId="EBI-725665">
        <id>Q9Y5U9</id>
    </interactant>
    <interactant intactId="EBI-4401517">
        <id>O14653</id>
        <label>GOSR2</label>
    </interactant>
    <organismsDiffer>false</organismsDiffer>
    <experiments>3</experiments>
</comment>
<comment type="interaction">
    <interactant intactId="EBI-725665">
        <id>Q9Y5U9</id>
    </interactant>
    <interactant intactId="EBI-18076404">
        <id>O15529</id>
        <label>GPR42</label>
    </interactant>
    <organismsDiffer>false</organismsDiffer>
    <experiments>3</experiments>
</comment>
<comment type="interaction">
    <interactant intactId="EBI-725665">
        <id>Q9Y5U9</id>
    </interactant>
    <interactant intactId="EBI-2868124">
        <id>Q9BSE4</id>
        <label>HERPUD2</label>
    </interactant>
    <organismsDiffer>false</organismsDiffer>
    <experiments>3</experiments>
</comment>
<comment type="interaction">
    <interactant intactId="EBI-725665">
        <id>Q9Y5U9</id>
    </interactant>
    <interactant intactId="EBI-10266796">
        <id>Q8N5M9</id>
        <label>JAGN1</label>
    </interactant>
    <organismsDiffer>false</organismsDiffer>
    <experiments>3</experiments>
</comment>
<comment type="interaction">
    <interactant intactId="EBI-725665">
        <id>Q9Y5U9</id>
    </interactant>
    <interactant intactId="EBI-8286599">
        <id>Q09470</id>
        <label>KCNA1</label>
    </interactant>
    <organismsDiffer>false</organismsDiffer>
    <experiments>3</experiments>
</comment>
<comment type="interaction">
    <interactant intactId="EBI-725665">
        <id>Q9Y5U9</id>
    </interactant>
    <interactant intactId="EBI-12179105">
        <id>O75425</id>
        <label>MOSPD3</label>
    </interactant>
    <organismsDiffer>false</organismsDiffer>
    <experiments>3</experiments>
</comment>
<comment type="interaction">
    <interactant intactId="EBI-725665">
        <id>Q9Y5U9</id>
    </interactant>
    <interactant intactId="EBI-594836">
        <id>O00623</id>
        <label>PEX12</label>
    </interactant>
    <organismsDiffer>false</organismsDiffer>
    <experiments>3</experiments>
</comment>
<comment type="interaction">
    <interactant intactId="EBI-725665">
        <id>Q9Y5U9</id>
    </interactant>
    <interactant intactId="EBI-17630288">
        <id>P57054</id>
        <label>PIGP</label>
    </interactant>
    <organismsDiffer>false</organismsDiffer>
    <experiments>3</experiments>
</comment>
<comment type="interaction">
    <interactant intactId="EBI-725665">
        <id>Q9Y5U9</id>
    </interactant>
    <interactant intactId="EBI-12188331">
        <id>P60201-2</id>
        <label>PLP1</label>
    </interactant>
    <organismsDiffer>false</organismsDiffer>
    <experiments>3</experiments>
</comment>
<comment type="interaction">
    <interactant intactId="EBI-725665">
        <id>Q9Y5U9</id>
    </interactant>
    <interactant intactId="EBI-11337900">
        <id>Q9H5K3</id>
        <label>POMK</label>
    </interactant>
    <organismsDiffer>false</organismsDiffer>
    <experiments>3</experiments>
</comment>
<comment type="interaction">
    <interactant intactId="EBI-725665">
        <id>Q9Y5U9</id>
    </interactant>
    <interactant intactId="EBI-17247926">
        <id>Q9NY72</id>
        <label>SCN3B</label>
    </interactant>
    <organismsDiffer>false</organismsDiffer>
    <experiments>3</experiments>
</comment>
<comment type="interaction">
    <interactant intactId="EBI-725665">
        <id>Q9Y5U9</id>
    </interactant>
    <interactant intactId="EBI-13918058">
        <id>O14863</id>
        <label>SLC30A4</label>
    </interactant>
    <organismsDiffer>false</organismsDiffer>
    <experiments>3</experiments>
</comment>
<comment type="interaction">
    <interactant intactId="EBI-725665">
        <id>Q9Y5U9</id>
    </interactant>
    <interactant intactId="EBI-13351685">
        <id>Q96CE8</id>
        <label>TM4SF18</label>
    </interactant>
    <organismsDiffer>false</organismsDiffer>
    <experiments>3</experiments>
</comment>
<comment type="interaction">
    <interactant intactId="EBI-725665">
        <id>Q9Y5U9</id>
    </interactant>
    <interactant intactId="EBI-10694905">
        <id>Q5BJH2-2</id>
        <label>TMEM128</label>
    </interactant>
    <organismsDiffer>false</organismsDiffer>
    <experiments>3</experiments>
</comment>
<comment type="interaction">
    <interactant intactId="EBI-725665">
        <id>Q9Y5U9</id>
    </interactant>
    <interactant intactId="EBI-2800360">
        <id>Q9Y6G1</id>
        <label>TMEM14A</label>
    </interactant>
    <organismsDiffer>false</organismsDiffer>
    <experiments>3</experiments>
</comment>
<comment type="interaction">
    <interactant intactId="EBI-725665">
        <id>Q9Y5U9</id>
    </interactant>
    <interactant intactId="EBI-8638294">
        <id>Q9NUH8</id>
        <label>TMEM14B</label>
    </interactant>
    <organismsDiffer>false</organismsDiffer>
    <experiments>3</experiments>
</comment>
<comment type="interaction">
    <interactant intactId="EBI-725665">
        <id>Q9Y5U9</id>
    </interactant>
    <interactant intactId="EBI-13383218">
        <id>Q8TBQ9</id>
        <label>TMEM167A</label>
    </interactant>
    <organismsDiffer>false</organismsDiffer>
    <experiments>5</experiments>
</comment>
<comment type="interaction">
    <interactant intactId="EBI-725665">
        <id>Q9Y5U9</id>
    </interactant>
    <interactant intactId="EBI-10982110">
        <id>Q96Q45-2</id>
        <label>TMEM237</label>
    </interactant>
    <organismsDiffer>false</organismsDiffer>
    <experiments>5</experiments>
</comment>
<comment type="interaction">
    <interactant intactId="EBI-725665">
        <id>Q9Y5U9</id>
    </interactant>
    <interactant intactId="EBI-12019210">
        <id>P61165</id>
        <label>TMEM258</label>
    </interactant>
    <organismsDiffer>false</organismsDiffer>
    <experiments>3</experiments>
</comment>
<comment type="interaction">
    <interactant intactId="EBI-725665">
        <id>Q9Y5U9</id>
    </interactant>
    <interactant intactId="EBI-11742770">
        <id>Q96HE8</id>
        <label>TMEM80</label>
    </interactant>
    <organismsDiffer>false</organismsDiffer>
    <experiments>3</experiments>
</comment>
<comment type="interaction">
    <interactant intactId="EBI-725665">
        <id>Q9Y5U9</id>
    </interactant>
    <interactant intactId="EBI-2548832">
        <id>Q8N661</id>
        <label>TMEM86B</label>
    </interactant>
    <organismsDiffer>false</organismsDiffer>
    <experiments>3</experiments>
</comment>
<comment type="interaction">
    <interactant intactId="EBI-725665">
        <id>Q9Y5U9</id>
    </interactant>
    <interactant intactId="EBI-11724433">
        <id>Q6ZT21</id>
        <label>TMPPE</label>
    </interactant>
    <organismsDiffer>false</organismsDiffer>
    <experiments>3</experiments>
</comment>
<comment type="interaction">
    <interactant intactId="EBI-725665">
        <id>Q9Y5U9</id>
    </interactant>
    <interactant intactId="EBI-6447886">
        <id>Q9Y320</id>
        <label>TMX2</label>
    </interactant>
    <organismsDiffer>false</organismsDiffer>
    <experiments>3</experiments>
</comment>
<comment type="interaction">
    <interactant intactId="EBI-725665">
        <id>Q9Y5U9</id>
    </interactant>
    <interactant intactId="EBI-18055230">
        <id>P34981</id>
        <label>TRHR</label>
    </interactant>
    <organismsDiffer>false</organismsDiffer>
    <experiments>3</experiments>
</comment>
<comment type="interaction">
    <interactant intactId="EBI-725665">
        <id>Q9Y5U9</id>
    </interactant>
    <interactant intactId="EBI-741480">
        <id>Q9UMX0</id>
        <label>UBQLN1</label>
    </interactant>
    <organismsDiffer>false</organismsDiffer>
    <experiments>3</experiments>
</comment>
<comment type="interaction">
    <interactant intactId="EBI-725665">
        <id>Q9Y5U9</id>
    </interactant>
    <interactant intactId="EBI-751253">
        <id>Q9BSR8</id>
        <label>YIPF4</label>
    </interactant>
    <organismsDiffer>false</organismsDiffer>
    <experiments>3</experiments>
</comment>
<comment type="interaction">
    <interactant intactId="EBI-725665">
        <id>Q9Y5U9</id>
    </interactant>
    <interactant intactId="EBI-3892947">
        <id>Q5T4F4</id>
        <label>ZFYVE27</label>
    </interactant>
    <organismsDiffer>false</organismsDiffer>
    <experiments>3</experiments>
</comment>
<comment type="subcellular location">
    <subcellularLocation>
        <location evidence="3 11">Endoplasmic reticulum membrane</location>
        <topology evidence="2">Multi-pass membrane protein</topology>
    </subcellularLocation>
</comment>
<comment type="tissue specificity">
    <text evidence="3">Highest levels in heart, skeletal muscle, and kidney.</text>
</comment>
<comment type="disease" evidence="4 5 6">
    <disease id="DI-03273">
        <name>Microcephaly, epilepsy, and diabetes syndrome 1</name>
        <acronym>MEDS1</acronym>
        <description>An autosomal recessive disorder characterized by microcephaly, simplified gyral pattern, severe epilepsy, and infantile diabetes.</description>
        <dbReference type="MIM" id="614231"/>
    </disease>
    <text>The disease is caused by variants affecting the gene represented in this entry.</text>
</comment>
<comment type="similarity">
    <text evidence="10">Belongs to the YOS1 family.</text>
</comment>
<keyword id="KW-0219">Diabetes mellitus</keyword>
<keyword id="KW-0225">Disease variant</keyword>
<keyword id="KW-0256">Endoplasmic reticulum</keyword>
<keyword id="KW-0887">Epilepsy</keyword>
<keyword id="KW-0472">Membrane</keyword>
<keyword id="KW-0653">Protein transport</keyword>
<keyword id="KW-1267">Proteomics identification</keyword>
<keyword id="KW-1185">Reference proteome</keyword>
<keyword id="KW-0812">Transmembrane</keyword>
<keyword id="KW-1133">Transmembrane helix</keyword>
<keyword id="KW-0813">Transport</keyword>
<evidence type="ECO:0000250" key="1">
    <source>
        <dbReference type="UniProtKB" id="Q9CR20"/>
    </source>
</evidence>
<evidence type="ECO:0000255" key="2"/>
<evidence type="ECO:0000269" key="3">
    <source>
    </source>
</evidence>
<evidence type="ECO:0000269" key="4">
    <source>
    </source>
</evidence>
<evidence type="ECO:0000269" key="5">
    <source>
    </source>
</evidence>
<evidence type="ECO:0000269" key="6">
    <source>
    </source>
</evidence>
<evidence type="ECO:0000269" key="7">
    <source>
    </source>
</evidence>
<evidence type="ECO:0000303" key="8">
    <source>
    </source>
</evidence>
<evidence type="ECO:0000303" key="9">
    <source>
    </source>
</evidence>
<evidence type="ECO:0000305" key="10"/>
<evidence type="ECO:0000305" key="11">
    <source>
    </source>
</evidence>
<evidence type="ECO:0000312" key="12">
    <source>
        <dbReference type="EMBL" id="AAD39917.1"/>
    </source>
</evidence>
<evidence type="ECO:0000312" key="13">
    <source>
        <dbReference type="EMBL" id="AAF80762.1"/>
    </source>
</evidence>
<evidence type="ECO:0000312" key="14">
    <source>
        <dbReference type="EMBL" id="AAH10888.1"/>
    </source>
</evidence>
<evidence type="ECO:0000312" key="15">
    <source>
        <dbReference type="EMBL" id="AAH17391.1"/>
    </source>
</evidence>
<evidence type="ECO:0000312" key="16">
    <source>
        <dbReference type="EMBL" id="AAK53816.1"/>
    </source>
</evidence>
<evidence type="ECO:0000312" key="17">
    <source>
        <dbReference type="EMBL" id="CAG38519.1"/>
    </source>
</evidence>
<evidence type="ECO:0000312" key="18">
    <source>
        <dbReference type="HGNC" id="HGNC:18550"/>
    </source>
</evidence>
<feature type="chain" id="PRO_0000257961" description="Immediate early response 3-interacting protein 1">
    <location>
        <begin position="1"/>
        <end position="82"/>
    </location>
</feature>
<feature type="transmembrane region" description="Helical" evidence="2">
    <location>
        <begin position="2"/>
        <end position="22"/>
    </location>
</feature>
<feature type="transmembrane region" description="Helical" evidence="2">
    <location>
        <begin position="62"/>
        <end position="82"/>
    </location>
</feature>
<feature type="sequence variant" id="VAR_066569" description="In MEDS1; dbSNP:rs387907011." evidence="4 6">
    <original>V</original>
    <variation>G</variation>
    <location>
        <position position="21"/>
    </location>
</feature>
<feature type="sequence variant" id="VAR_066570" description="In MEDS1; dbSNP:rs387907012." evidence="4 5">
    <original>L</original>
    <variation>P</variation>
    <location>
        <position position="78"/>
    </location>
</feature>
<organism>
    <name type="scientific">Homo sapiens</name>
    <name type="common">Human</name>
    <dbReference type="NCBI Taxonomy" id="9606"/>
    <lineage>
        <taxon>Eukaryota</taxon>
        <taxon>Metazoa</taxon>
        <taxon>Chordata</taxon>
        <taxon>Craniata</taxon>
        <taxon>Vertebrata</taxon>
        <taxon>Euteleostomi</taxon>
        <taxon>Mammalia</taxon>
        <taxon>Eutheria</taxon>
        <taxon>Euarchontoglires</taxon>
        <taxon>Primates</taxon>
        <taxon>Haplorrhini</taxon>
        <taxon>Catarrhini</taxon>
        <taxon>Hominidae</taxon>
        <taxon>Homo</taxon>
    </lineage>
</organism>
<dbReference type="EMBL" id="AF371963">
    <property type="protein sequence ID" value="AAK53816.1"/>
    <property type="molecule type" value="mRNA"/>
</dbReference>
<dbReference type="EMBL" id="AF125100">
    <property type="protein sequence ID" value="AAD39917.1"/>
    <property type="molecule type" value="mRNA"/>
</dbReference>
<dbReference type="EMBL" id="AF164798">
    <property type="protein sequence ID" value="AAF80762.1"/>
    <property type="molecule type" value="mRNA"/>
</dbReference>
<dbReference type="EMBL" id="AL136667">
    <property type="protein sequence ID" value="CAB66602.1"/>
    <property type="molecule type" value="mRNA"/>
</dbReference>
<dbReference type="EMBL" id="CR533488">
    <property type="protein sequence ID" value="CAG38519.1"/>
    <property type="molecule type" value="mRNA"/>
</dbReference>
<dbReference type="EMBL" id="BC010888">
    <property type="protein sequence ID" value="AAH10888.1"/>
    <property type="molecule type" value="mRNA"/>
</dbReference>
<dbReference type="EMBL" id="BC017391">
    <property type="protein sequence ID" value="AAH17391.1"/>
    <property type="molecule type" value="mRNA"/>
</dbReference>
<dbReference type="CCDS" id="CCDS11933.1"/>
<dbReference type="RefSeq" id="NP_057181.1">
    <property type="nucleotide sequence ID" value="NM_016097.5"/>
</dbReference>
<dbReference type="SMR" id="Q9Y5U9"/>
<dbReference type="BioGRID" id="119311">
    <property type="interactions" value="65"/>
</dbReference>
<dbReference type="FunCoup" id="Q9Y5U9">
    <property type="interactions" value="1559"/>
</dbReference>
<dbReference type="IntAct" id="Q9Y5U9">
    <property type="interactions" value="52"/>
</dbReference>
<dbReference type="MINT" id="Q9Y5U9"/>
<dbReference type="STRING" id="9606.ENSP00000256433"/>
<dbReference type="iPTMnet" id="Q9Y5U9"/>
<dbReference type="PhosphoSitePlus" id="Q9Y5U9"/>
<dbReference type="BioMuta" id="IER3IP1"/>
<dbReference type="DMDM" id="74735295"/>
<dbReference type="jPOST" id="Q9Y5U9"/>
<dbReference type="MassIVE" id="Q9Y5U9"/>
<dbReference type="PaxDb" id="9606-ENSP00000256433"/>
<dbReference type="PeptideAtlas" id="Q9Y5U9"/>
<dbReference type="ProteomicsDB" id="86512"/>
<dbReference type="Pumba" id="Q9Y5U9"/>
<dbReference type="TopDownProteomics" id="Q9Y5U9"/>
<dbReference type="Antibodypedia" id="2445">
    <property type="antibodies" value="23 antibodies from 13 providers"/>
</dbReference>
<dbReference type="DNASU" id="51124"/>
<dbReference type="Ensembl" id="ENST00000256433.6">
    <property type="protein sequence ID" value="ENSP00000256433.3"/>
    <property type="gene ID" value="ENSG00000134049.6"/>
</dbReference>
<dbReference type="GeneID" id="51124"/>
<dbReference type="KEGG" id="hsa:51124"/>
<dbReference type="MANE-Select" id="ENST00000256433.6">
    <property type="protein sequence ID" value="ENSP00000256433.3"/>
    <property type="RefSeq nucleotide sequence ID" value="NM_016097.5"/>
    <property type="RefSeq protein sequence ID" value="NP_057181.1"/>
</dbReference>
<dbReference type="UCSC" id="uc002lcu.4">
    <property type="organism name" value="human"/>
</dbReference>
<dbReference type="AGR" id="HGNC:18550"/>
<dbReference type="CTD" id="51124"/>
<dbReference type="DisGeNET" id="51124"/>
<dbReference type="GeneCards" id="IER3IP1"/>
<dbReference type="HGNC" id="HGNC:18550">
    <property type="gene designation" value="IER3IP1"/>
</dbReference>
<dbReference type="HPA" id="ENSG00000134049">
    <property type="expression patterns" value="Low tissue specificity"/>
</dbReference>
<dbReference type="MalaCards" id="IER3IP1"/>
<dbReference type="MIM" id="609382">
    <property type="type" value="gene"/>
</dbReference>
<dbReference type="MIM" id="614231">
    <property type="type" value="phenotype"/>
</dbReference>
<dbReference type="neXtProt" id="NX_Q9Y5U9"/>
<dbReference type="OpenTargets" id="ENSG00000134049"/>
<dbReference type="Orphanet" id="306558">
    <property type="disease" value="Primary microcephaly-epilepsy-permanent neonatal diabetes syndrome"/>
</dbReference>
<dbReference type="PharmGKB" id="PA134899219"/>
<dbReference type="VEuPathDB" id="HostDB:ENSG00000134049"/>
<dbReference type="eggNOG" id="KOG4779">
    <property type="taxonomic scope" value="Eukaryota"/>
</dbReference>
<dbReference type="GeneTree" id="ENSGT00510000047648"/>
<dbReference type="HOGENOM" id="CLU_152125_3_0_1"/>
<dbReference type="InParanoid" id="Q9Y5U9"/>
<dbReference type="OMA" id="VQTVMRM"/>
<dbReference type="OrthoDB" id="15356at2759"/>
<dbReference type="PAN-GO" id="Q9Y5U9">
    <property type="GO annotations" value="4 GO annotations based on evolutionary models"/>
</dbReference>
<dbReference type="PhylomeDB" id="Q9Y5U9"/>
<dbReference type="TreeFam" id="TF300263"/>
<dbReference type="PathwayCommons" id="Q9Y5U9"/>
<dbReference type="SignaLink" id="Q9Y5U9"/>
<dbReference type="BioGRID-ORCS" id="51124">
    <property type="hits" value="129 hits in 1145 CRISPR screens"/>
</dbReference>
<dbReference type="ChiTaRS" id="IER3IP1">
    <property type="organism name" value="human"/>
</dbReference>
<dbReference type="GeneWiki" id="IER3IP1"/>
<dbReference type="GenomeRNAi" id="51124"/>
<dbReference type="Pharos" id="Q9Y5U9">
    <property type="development level" value="Tbio"/>
</dbReference>
<dbReference type="PRO" id="PR:Q9Y5U9"/>
<dbReference type="Proteomes" id="UP000005640">
    <property type="component" value="Chromosome 18"/>
</dbReference>
<dbReference type="RNAct" id="Q9Y5U9">
    <property type="molecule type" value="protein"/>
</dbReference>
<dbReference type="Bgee" id="ENSG00000134049">
    <property type="expression patterns" value="Expressed in oocyte and 197 other cell types or tissues"/>
</dbReference>
<dbReference type="ExpressionAtlas" id="Q9Y5U9">
    <property type="expression patterns" value="baseline and differential"/>
</dbReference>
<dbReference type="GO" id="GO:0030134">
    <property type="term" value="C:COPII-coated ER to Golgi transport vesicle"/>
    <property type="evidence" value="ECO:0000318"/>
    <property type="project" value="GO_Central"/>
</dbReference>
<dbReference type="GO" id="GO:0005783">
    <property type="term" value="C:endoplasmic reticulum"/>
    <property type="evidence" value="ECO:0000314"/>
    <property type="project" value="LIFEdb"/>
</dbReference>
<dbReference type="GO" id="GO:0005789">
    <property type="term" value="C:endoplasmic reticulum membrane"/>
    <property type="evidence" value="ECO:0000314"/>
    <property type="project" value="UniProtKB"/>
</dbReference>
<dbReference type="GO" id="GO:0005794">
    <property type="term" value="C:Golgi apparatus"/>
    <property type="evidence" value="ECO:0000314"/>
    <property type="project" value="HPA"/>
</dbReference>
<dbReference type="GO" id="GO:0000139">
    <property type="term" value="C:Golgi membrane"/>
    <property type="evidence" value="ECO:0000318"/>
    <property type="project" value="GO_Central"/>
</dbReference>
<dbReference type="GO" id="GO:0016020">
    <property type="term" value="C:membrane"/>
    <property type="evidence" value="ECO:0007005"/>
    <property type="project" value="UniProtKB"/>
</dbReference>
<dbReference type="GO" id="GO:0007420">
    <property type="term" value="P:brain development"/>
    <property type="evidence" value="ECO:0000314"/>
    <property type="project" value="UniProtKB"/>
</dbReference>
<dbReference type="GO" id="GO:0048469">
    <property type="term" value="P:cell maturation"/>
    <property type="evidence" value="ECO:0007669"/>
    <property type="project" value="Ensembl"/>
</dbReference>
<dbReference type="GO" id="GO:0006325">
    <property type="term" value="P:chromatin organization"/>
    <property type="evidence" value="ECO:0007669"/>
    <property type="project" value="Ensembl"/>
</dbReference>
<dbReference type="GO" id="GO:0007029">
    <property type="term" value="P:endoplasmic reticulum organization"/>
    <property type="evidence" value="ECO:0007669"/>
    <property type="project" value="Ensembl"/>
</dbReference>
<dbReference type="GO" id="GO:0006888">
    <property type="term" value="P:endoplasmic reticulum to Golgi vesicle-mediated transport"/>
    <property type="evidence" value="ECO:0000318"/>
    <property type="project" value="GO_Central"/>
</dbReference>
<dbReference type="GO" id="GO:0010467">
    <property type="term" value="P:gene expression"/>
    <property type="evidence" value="ECO:0007669"/>
    <property type="project" value="Ensembl"/>
</dbReference>
<dbReference type="GO" id="GO:0042593">
    <property type="term" value="P:glucose homeostasis"/>
    <property type="evidence" value="ECO:0007669"/>
    <property type="project" value="Ensembl"/>
</dbReference>
<dbReference type="GO" id="GO:1901142">
    <property type="term" value="P:insulin metabolic process"/>
    <property type="evidence" value="ECO:0007669"/>
    <property type="project" value="Ensembl"/>
</dbReference>
<dbReference type="GO" id="GO:0043066">
    <property type="term" value="P:negative regulation of apoptotic process"/>
    <property type="evidence" value="ECO:0007669"/>
    <property type="project" value="Ensembl"/>
</dbReference>
<dbReference type="GO" id="GO:0008285">
    <property type="term" value="P:negative regulation of cell population proliferation"/>
    <property type="evidence" value="ECO:0007669"/>
    <property type="project" value="Ensembl"/>
</dbReference>
<dbReference type="GO" id="GO:0035265">
    <property type="term" value="P:organ growth"/>
    <property type="evidence" value="ECO:0000314"/>
    <property type="project" value="UniProtKB"/>
</dbReference>
<dbReference type="GO" id="GO:0003331">
    <property type="term" value="P:positive regulation of extracellular matrix constituent secretion"/>
    <property type="evidence" value="ECO:0000315"/>
    <property type="project" value="UniProtKB"/>
</dbReference>
<dbReference type="GO" id="GO:0050714">
    <property type="term" value="P:positive regulation of protein secretion"/>
    <property type="evidence" value="ECO:0000315"/>
    <property type="project" value="UniProtKB"/>
</dbReference>
<dbReference type="GO" id="GO:0015031">
    <property type="term" value="P:protein transport"/>
    <property type="evidence" value="ECO:0007669"/>
    <property type="project" value="UniProtKB-KW"/>
</dbReference>
<dbReference type="GO" id="GO:2000269">
    <property type="term" value="P:regulation of fibroblast apoptotic process"/>
    <property type="evidence" value="ECO:0000315"/>
    <property type="project" value="UniProtKB"/>
</dbReference>
<dbReference type="GO" id="GO:0003309">
    <property type="term" value="P:type B pancreatic cell differentiation"/>
    <property type="evidence" value="ECO:0007669"/>
    <property type="project" value="Ensembl"/>
</dbReference>
<dbReference type="InterPro" id="IPR013880">
    <property type="entry name" value="Yos1"/>
</dbReference>
<dbReference type="PANTHER" id="PTHR15858">
    <property type="entry name" value="IMMEDIATE EARLY RESPONSE 3-INTERACTING PROTEIN 1"/>
    <property type="match status" value="1"/>
</dbReference>
<dbReference type="PANTHER" id="PTHR15858:SF0">
    <property type="entry name" value="IMMEDIATE EARLY RESPONSE 3-INTERACTING PROTEIN 1"/>
    <property type="match status" value="1"/>
</dbReference>
<dbReference type="Pfam" id="PF08571">
    <property type="entry name" value="Yos1"/>
    <property type="match status" value="1"/>
</dbReference>
<protein>
    <recommendedName>
        <fullName evidence="10">Immediate early response 3-interacting protein 1</fullName>
    </recommendedName>
</protein>
<name>IR3IP_HUMAN</name>
<accession>Q9Y5U9</accession>
<proteinExistence type="evidence at protein level"/>
<reference key="1">
    <citation type="journal article" date="2004" name="Gene">
        <title>Cloning and characterization of a novel endoplasmic reticulum localized G-patch domain protein, IER3IP1.</title>
        <authorList>
            <person name="Yiu W.H."/>
            <person name="Poon J.W.M."/>
            <person name="Tsui S.K.W."/>
            <person name="Fung K.P."/>
            <person name="Waye M.M.Y."/>
        </authorList>
    </citation>
    <scope>NUCLEOTIDE SEQUENCE [MRNA]</scope>
    <scope>SUBCELLULAR LOCATION</scope>
    <scope>TISSUE SPECIFICITY</scope>
    <source>
        <tissue evidence="16">Liver</tissue>
    </source>
</reference>
<reference key="2">
    <citation type="journal article" date="2000" name="Genome Res.">
        <title>Cloning and functional analysis of cDNAs with open reading frames for 300 previously undefined genes expressed in CD34+ hematopoietic stem/progenitor cells.</title>
        <authorList>
            <person name="Zhang Q.-H."/>
            <person name="Ye M."/>
            <person name="Wu X.-Y."/>
            <person name="Ren S.-X."/>
            <person name="Zhao M."/>
            <person name="Zhao C.-J."/>
            <person name="Fu G."/>
            <person name="Shen Y."/>
            <person name="Fan H.-Y."/>
            <person name="Lu G."/>
            <person name="Zhong M."/>
            <person name="Xu X.-R."/>
            <person name="Han Z.-G."/>
            <person name="Zhang J.-W."/>
            <person name="Tao J."/>
            <person name="Huang Q.-H."/>
            <person name="Zhou J."/>
            <person name="Hu G.-X."/>
            <person name="Gu J."/>
            <person name="Chen S.-J."/>
            <person name="Chen Z."/>
        </authorList>
    </citation>
    <scope>NUCLEOTIDE SEQUENCE [LARGE SCALE MRNA]</scope>
    <source>
        <tissue evidence="12">Umbilical cord blood</tissue>
    </source>
</reference>
<reference key="3">
    <citation type="journal article" date="2000" name="Proc. Natl. Acad. Sci. U.S.A.">
        <title>Gene expression profiling in the human hypothalamus-pituitary-adrenal axis and full-length cDNA cloning.</title>
        <authorList>
            <person name="Hu R.-M."/>
            <person name="Han Z.-G."/>
            <person name="Song H.-D."/>
            <person name="Peng Y.-D."/>
            <person name="Huang Q.-H."/>
            <person name="Ren S.-X."/>
            <person name="Gu Y.-J."/>
            <person name="Huang C.-H."/>
            <person name="Li Y.-B."/>
            <person name="Jiang C.-L."/>
            <person name="Fu G."/>
            <person name="Zhang Q.-H."/>
            <person name="Gu B.-W."/>
            <person name="Dai M."/>
            <person name="Mao Y.-F."/>
            <person name="Gao G.-F."/>
            <person name="Rong R."/>
            <person name="Ye M."/>
            <person name="Zhou J."/>
            <person name="Xu S.-H."/>
            <person name="Gu J."/>
            <person name="Shi J.-X."/>
            <person name="Jin W.-R."/>
            <person name="Zhang C.-K."/>
            <person name="Wu T.-M."/>
            <person name="Huang G.-Y."/>
            <person name="Chen Z."/>
            <person name="Chen M.-D."/>
            <person name="Chen J.-L."/>
        </authorList>
    </citation>
    <scope>NUCLEOTIDE SEQUENCE [LARGE SCALE MRNA]</scope>
    <source>
        <tissue evidence="13">Adrenal gland</tissue>
    </source>
</reference>
<reference key="4">
    <citation type="journal article" date="2001" name="Genome Res.">
        <title>Towards a catalog of human genes and proteins: sequencing and analysis of 500 novel complete protein coding human cDNAs.</title>
        <authorList>
            <person name="Wiemann S."/>
            <person name="Weil B."/>
            <person name="Wellenreuther R."/>
            <person name="Gassenhuber J."/>
            <person name="Glassl S."/>
            <person name="Ansorge W."/>
            <person name="Boecher M."/>
            <person name="Bloecker H."/>
            <person name="Bauersachs S."/>
            <person name="Blum H."/>
            <person name="Lauber J."/>
            <person name="Duesterhoeft A."/>
            <person name="Beyer A."/>
            <person name="Koehrer K."/>
            <person name="Strack N."/>
            <person name="Mewes H.-W."/>
            <person name="Ottenwaelder B."/>
            <person name="Obermaier B."/>
            <person name="Tampe J."/>
            <person name="Heubner D."/>
            <person name="Wambutt R."/>
            <person name="Korn B."/>
            <person name="Klein M."/>
            <person name="Poustka A."/>
        </authorList>
    </citation>
    <scope>NUCLEOTIDE SEQUENCE [LARGE SCALE MRNA]</scope>
    <source>
        <tissue>Brain</tissue>
    </source>
</reference>
<reference evidence="17" key="5">
    <citation type="submission" date="2004-06" db="EMBL/GenBank/DDBJ databases">
        <title>Cloning of human full open reading frames in Gateway(TM) system entry vector (pDONR201).</title>
        <authorList>
            <person name="Ebert L."/>
            <person name="Schick M."/>
            <person name="Neubert P."/>
            <person name="Schatten R."/>
            <person name="Henze S."/>
            <person name="Korn B."/>
        </authorList>
    </citation>
    <scope>NUCLEOTIDE SEQUENCE [LARGE SCALE MRNA]</scope>
</reference>
<reference key="6">
    <citation type="journal article" date="2004" name="Genome Res.">
        <title>The status, quality, and expansion of the NIH full-length cDNA project: the Mammalian Gene Collection (MGC).</title>
        <authorList>
            <consortium name="The MGC Project Team"/>
        </authorList>
    </citation>
    <scope>NUCLEOTIDE SEQUENCE [LARGE SCALE MRNA]</scope>
    <source>
        <tissue evidence="15">Bone marrow</tissue>
        <tissue evidence="14">Brain</tissue>
    </source>
</reference>
<reference key="7">
    <citation type="journal article" date="2015" name="Proteomics">
        <title>N-terminome analysis of the human mitochondrial proteome.</title>
        <authorList>
            <person name="Vaca Jacome A.S."/>
            <person name="Rabilloud T."/>
            <person name="Schaeffer-Reiss C."/>
            <person name="Rompais M."/>
            <person name="Ayoub D."/>
            <person name="Lane L."/>
            <person name="Bairoch A."/>
            <person name="Van Dorsselaer A."/>
            <person name="Carapito C."/>
        </authorList>
    </citation>
    <scope>IDENTIFICATION BY MASS SPECTROMETRY [LARGE SCALE ANALYSIS]</scope>
</reference>
<reference key="8">
    <citation type="journal article" date="2020" name="Science">
        <title>A human tissue screen identifies a regulator of ER secretion as a brain-size determinant.</title>
        <authorList>
            <person name="Esk C."/>
            <person name="Lindenhofer D."/>
            <person name="Haendeler S."/>
            <person name="Wester R.A."/>
            <person name="Pflug F."/>
            <person name="Schroeder B."/>
            <person name="Bagley J.A."/>
            <person name="Elling U."/>
            <person name="Zuber J."/>
            <person name="von Haeseler A."/>
            <person name="Knoblich J.A."/>
        </authorList>
    </citation>
    <scope>FUNCTION</scope>
    <scope>SUBCELLULAR LOCATION</scope>
</reference>
<reference key="9">
    <citation type="journal article" date="2011" name="Am. J. Hum. Genet.">
        <title>Microcephaly with simplified gyration, epilepsy, and infantile diabetes linked to inappropriate apoptosis of neural progenitors.</title>
        <authorList>
            <person name="Poulton C.J."/>
            <person name="Schot R."/>
            <person name="Kia S.K."/>
            <person name="Jones M."/>
            <person name="Verheijen F.W."/>
            <person name="Venselaar H."/>
            <person name="de Wit M.C."/>
            <person name="de Graaff E."/>
            <person name="Bertoli-Avella A.M."/>
            <person name="Mancini G.M."/>
        </authorList>
    </citation>
    <scope>VARIANTS MEDS1 GLY-21 AND PRO-78</scope>
</reference>
<reference key="10">
    <citation type="journal article" date="2012" name="Am. J. Med. Genet. A">
        <title>A homozygous IER3IP1 mutation causes microcephaly with simplified gyral pattern, epilepsy, and permanent neonatal diabetes syndrome (MEDS).</title>
        <authorList>
            <person name="Abdel-Salam G.M."/>
            <person name="Schaffer A.E."/>
            <person name="Zaki M.S."/>
            <person name="Dixon-Salazar T."/>
            <person name="Mostafa I.S."/>
            <person name="Afifi H.H."/>
            <person name="Gleeson J.G."/>
        </authorList>
    </citation>
    <scope>VARIANT MEDS1 PRO-78</scope>
</reference>
<reference key="11">
    <citation type="journal article" date="2014" name="Pediatr. Diabetes">
        <title>Microcephaly, epilepsy, and neonatal diabetes due to compound heterozygous mutations in IER3IP1: insights into the natural history of a rare disorder.</title>
        <authorList>
            <person name="Shalev S.A."/>
            <person name="Tenenbaum-Rakover Y."/>
            <person name="Horovitz Y."/>
            <person name="Paz V.P."/>
            <person name="Ye H."/>
            <person name="Carmody D."/>
            <person name="Highland H.M."/>
            <person name="Boerwinkle E."/>
            <person name="Hanis C.L."/>
            <person name="Muzny D.M."/>
            <person name="Gibbs R.A."/>
            <person name="Bell G.I."/>
            <person name="Philipson L.H."/>
            <person name="Greeley S.A."/>
        </authorList>
    </citation>
    <scope>VARIANT MEDS1 GLY-21</scope>
</reference>
<gene>
    <name evidence="9 18" type="primary">IER3IP1</name>
    <name evidence="8" type="ORF">HSPC039</name>
</gene>